<keyword id="KW-0479">Metal-binding</keyword>
<keyword id="KW-1185">Reference proteome</keyword>
<keyword id="KW-0862">Zinc</keyword>
<keyword id="KW-0863">Zinc-finger</keyword>
<comment type="similarity">
    <text evidence="4">Belongs to the TRIM/RBCC family.</text>
</comment>
<gene>
    <name type="primary">TRIM77</name>
    <name type="synonym">TRIM77P</name>
</gene>
<dbReference type="EMBL" id="AP003122">
    <property type="status" value="NOT_ANNOTATED_CDS"/>
    <property type="molecule type" value="Genomic_DNA"/>
</dbReference>
<dbReference type="EMBL" id="JF968445">
    <property type="protein sequence ID" value="AFI99088.1"/>
    <property type="molecule type" value="mRNA"/>
</dbReference>
<dbReference type="CCDS" id="CCDS60929.1"/>
<dbReference type="RefSeq" id="NP_001139634.1">
    <property type="nucleotide sequence ID" value="NM_001146162.1"/>
</dbReference>
<dbReference type="SMR" id="I1YAP6"/>
<dbReference type="BioGRID" id="133459">
    <property type="interactions" value="1"/>
</dbReference>
<dbReference type="FunCoup" id="I1YAP6">
    <property type="interactions" value="9"/>
</dbReference>
<dbReference type="IntAct" id="I1YAP6">
    <property type="interactions" value="1"/>
</dbReference>
<dbReference type="STRING" id="9606.ENSP00000474003"/>
<dbReference type="iPTMnet" id="I1YAP6"/>
<dbReference type="PhosphoSitePlus" id="I1YAP6"/>
<dbReference type="BioMuta" id="TRIM77"/>
<dbReference type="PaxDb" id="9606-ENSP00000474003"/>
<dbReference type="Antibodypedia" id="72083">
    <property type="antibodies" value="4 antibodies from 4 providers"/>
</dbReference>
<dbReference type="DNASU" id="390231"/>
<dbReference type="Ensembl" id="ENST00000398290.7">
    <property type="protein sequence ID" value="ENSP00000474003.1"/>
    <property type="gene ID" value="ENSG00000214414.9"/>
</dbReference>
<dbReference type="GeneID" id="390231"/>
<dbReference type="KEGG" id="hsa:390231"/>
<dbReference type="MANE-Select" id="ENST00000398290.7">
    <property type="protein sequence ID" value="ENSP00000474003.1"/>
    <property type="RefSeq nucleotide sequence ID" value="NM_001146162.1"/>
    <property type="RefSeq protein sequence ID" value="NP_001139634.1"/>
</dbReference>
<dbReference type="UCSC" id="uc010rtw.2">
    <property type="organism name" value="human"/>
</dbReference>
<dbReference type="AGR" id="HGNC:34228"/>
<dbReference type="CTD" id="390231"/>
<dbReference type="DisGeNET" id="390231"/>
<dbReference type="GeneCards" id="TRIM77"/>
<dbReference type="HGNC" id="HGNC:34228">
    <property type="gene designation" value="TRIM77"/>
</dbReference>
<dbReference type="HPA" id="ENSG00000214414">
    <property type="expression patterns" value="Not detected"/>
</dbReference>
<dbReference type="neXtProt" id="NX_I1YAP6"/>
<dbReference type="OpenTargets" id="ENSG00000214414"/>
<dbReference type="VEuPathDB" id="HostDB:ENSG00000214414"/>
<dbReference type="eggNOG" id="KOG2177">
    <property type="taxonomic scope" value="Eukaryota"/>
</dbReference>
<dbReference type="GeneTree" id="ENSGT00940000163778"/>
<dbReference type="HOGENOM" id="CLU_013137_0_3_1"/>
<dbReference type="InParanoid" id="I1YAP6"/>
<dbReference type="OMA" id="DHKICSN"/>
<dbReference type="OrthoDB" id="654191at2759"/>
<dbReference type="PAN-GO" id="I1YAP6">
    <property type="GO annotations" value="5 GO annotations based on evolutionary models"/>
</dbReference>
<dbReference type="PhylomeDB" id="I1YAP6"/>
<dbReference type="PathwayCommons" id="I1YAP6"/>
<dbReference type="SignaLink" id="I1YAP6"/>
<dbReference type="SIGNOR" id="I1YAP6"/>
<dbReference type="BioGRID-ORCS" id="390231">
    <property type="hits" value="10 hits in 1053 CRISPR screens"/>
</dbReference>
<dbReference type="GenomeRNAi" id="390231"/>
<dbReference type="Pharos" id="I1YAP6">
    <property type="development level" value="Tdark"/>
</dbReference>
<dbReference type="PRO" id="PR:I1YAP6"/>
<dbReference type="Proteomes" id="UP000005640">
    <property type="component" value="Chromosome 11"/>
</dbReference>
<dbReference type="RNAct" id="I1YAP6">
    <property type="molecule type" value="protein"/>
</dbReference>
<dbReference type="Bgee" id="ENSG00000214414">
    <property type="expression patterns" value="Expressed in primordial germ cell in gonad and 1 other cell type or tissue"/>
</dbReference>
<dbReference type="ExpressionAtlas" id="I1YAP6">
    <property type="expression patterns" value="baseline and differential"/>
</dbReference>
<dbReference type="GO" id="GO:0005737">
    <property type="term" value="C:cytoplasm"/>
    <property type="evidence" value="ECO:0000318"/>
    <property type="project" value="GO_Central"/>
</dbReference>
<dbReference type="GO" id="GO:0061630">
    <property type="term" value="F:ubiquitin protein ligase activity"/>
    <property type="evidence" value="ECO:0000318"/>
    <property type="project" value="GO_Central"/>
</dbReference>
<dbReference type="GO" id="GO:0008270">
    <property type="term" value="F:zinc ion binding"/>
    <property type="evidence" value="ECO:0007669"/>
    <property type="project" value="UniProtKB-KW"/>
</dbReference>
<dbReference type="GO" id="GO:0045087">
    <property type="term" value="P:innate immune response"/>
    <property type="evidence" value="ECO:0000318"/>
    <property type="project" value="GO_Central"/>
</dbReference>
<dbReference type="GO" id="GO:0010468">
    <property type="term" value="P:regulation of gene expression"/>
    <property type="evidence" value="ECO:0000318"/>
    <property type="project" value="GO_Central"/>
</dbReference>
<dbReference type="CDD" id="cd19783">
    <property type="entry name" value="Bbox2_TRIM43-like"/>
    <property type="match status" value="1"/>
</dbReference>
<dbReference type="Gene3D" id="2.60.120.920">
    <property type="match status" value="1"/>
</dbReference>
<dbReference type="Gene3D" id="3.30.160.60">
    <property type="entry name" value="Classic Zinc Finger"/>
    <property type="match status" value="1"/>
</dbReference>
<dbReference type="Gene3D" id="3.30.40.10">
    <property type="entry name" value="Zinc/RING finger domain, C3HC4 (zinc finger)"/>
    <property type="match status" value="1"/>
</dbReference>
<dbReference type="InterPro" id="IPR001870">
    <property type="entry name" value="B30.2/SPRY"/>
</dbReference>
<dbReference type="InterPro" id="IPR043136">
    <property type="entry name" value="B30.2/SPRY_sf"/>
</dbReference>
<dbReference type="InterPro" id="IPR003879">
    <property type="entry name" value="Butyrophylin_SPRY"/>
</dbReference>
<dbReference type="InterPro" id="IPR013320">
    <property type="entry name" value="ConA-like_dom_sf"/>
</dbReference>
<dbReference type="InterPro" id="IPR003877">
    <property type="entry name" value="SPRY_dom"/>
</dbReference>
<dbReference type="InterPro" id="IPR050143">
    <property type="entry name" value="TRIM/RBCC"/>
</dbReference>
<dbReference type="InterPro" id="IPR000315">
    <property type="entry name" value="Znf_B-box"/>
</dbReference>
<dbReference type="InterPro" id="IPR018957">
    <property type="entry name" value="Znf_C3HC4_RING-type"/>
</dbReference>
<dbReference type="InterPro" id="IPR001841">
    <property type="entry name" value="Znf_RING"/>
</dbReference>
<dbReference type="InterPro" id="IPR013083">
    <property type="entry name" value="Znf_RING/FYVE/PHD"/>
</dbReference>
<dbReference type="InterPro" id="IPR017907">
    <property type="entry name" value="Znf_RING_CS"/>
</dbReference>
<dbReference type="PANTHER" id="PTHR24103">
    <property type="entry name" value="E3 UBIQUITIN-PROTEIN LIGASE TRIM"/>
    <property type="match status" value="1"/>
</dbReference>
<dbReference type="Pfam" id="PF00622">
    <property type="entry name" value="SPRY"/>
    <property type="match status" value="1"/>
</dbReference>
<dbReference type="Pfam" id="PF00097">
    <property type="entry name" value="zf-C3HC4"/>
    <property type="match status" value="1"/>
</dbReference>
<dbReference type="PRINTS" id="PR01407">
    <property type="entry name" value="BUTYPHLNCDUF"/>
</dbReference>
<dbReference type="SMART" id="SM00336">
    <property type="entry name" value="BBOX"/>
    <property type="match status" value="1"/>
</dbReference>
<dbReference type="SMART" id="SM00184">
    <property type="entry name" value="RING"/>
    <property type="match status" value="1"/>
</dbReference>
<dbReference type="SUPFAM" id="SSF57845">
    <property type="entry name" value="B-box zinc-binding domain"/>
    <property type="match status" value="1"/>
</dbReference>
<dbReference type="SUPFAM" id="SSF49899">
    <property type="entry name" value="Concanavalin A-like lectins/glucanases"/>
    <property type="match status" value="1"/>
</dbReference>
<dbReference type="SUPFAM" id="SSF57850">
    <property type="entry name" value="RING/U-box"/>
    <property type="match status" value="1"/>
</dbReference>
<dbReference type="PROSITE" id="PS50188">
    <property type="entry name" value="B302_SPRY"/>
    <property type="match status" value="1"/>
</dbReference>
<dbReference type="PROSITE" id="PS50119">
    <property type="entry name" value="ZF_BBOX"/>
    <property type="match status" value="1"/>
</dbReference>
<dbReference type="PROSITE" id="PS00518">
    <property type="entry name" value="ZF_RING_1"/>
    <property type="match status" value="1"/>
</dbReference>
<dbReference type="PROSITE" id="PS50089">
    <property type="entry name" value="ZF_RING_2"/>
    <property type="match status" value="1"/>
</dbReference>
<protein>
    <recommendedName>
        <fullName>Tripartite motif-containing protein 77</fullName>
    </recommendedName>
</protein>
<evidence type="ECO:0000255" key="1">
    <source>
        <dbReference type="PROSITE-ProRule" id="PRU00024"/>
    </source>
</evidence>
<evidence type="ECO:0000255" key="2">
    <source>
        <dbReference type="PROSITE-ProRule" id="PRU00175"/>
    </source>
</evidence>
<evidence type="ECO:0000255" key="3">
    <source>
        <dbReference type="PROSITE-ProRule" id="PRU00548"/>
    </source>
</evidence>
<evidence type="ECO:0000305" key="4"/>
<reference key="1">
    <citation type="journal article" date="2006" name="Nature">
        <title>Human chromosome 11 DNA sequence and analysis including novel gene identification.</title>
        <authorList>
            <person name="Taylor T.D."/>
            <person name="Noguchi H."/>
            <person name="Totoki Y."/>
            <person name="Toyoda A."/>
            <person name="Kuroki Y."/>
            <person name="Dewar K."/>
            <person name="Lloyd C."/>
            <person name="Itoh T."/>
            <person name="Takeda T."/>
            <person name="Kim D.-W."/>
            <person name="She X."/>
            <person name="Barlow K.F."/>
            <person name="Bloom T."/>
            <person name="Bruford E."/>
            <person name="Chang J.L."/>
            <person name="Cuomo C.A."/>
            <person name="Eichler E."/>
            <person name="FitzGerald M.G."/>
            <person name="Jaffe D.B."/>
            <person name="LaButti K."/>
            <person name="Nicol R."/>
            <person name="Park H.-S."/>
            <person name="Seaman C."/>
            <person name="Sougnez C."/>
            <person name="Yang X."/>
            <person name="Zimmer A.R."/>
            <person name="Zody M.C."/>
            <person name="Birren B.W."/>
            <person name="Nusbaum C."/>
            <person name="Fujiyama A."/>
            <person name="Hattori M."/>
            <person name="Rogers J."/>
            <person name="Lander E.S."/>
            <person name="Sakaki Y."/>
        </authorList>
    </citation>
    <scope>NUCLEOTIDE SEQUENCE [LARGE SCALE GENOMIC DNA]</scope>
</reference>
<reference key="2">
    <citation type="journal article" date="2011" name="PLoS Genet.">
        <title>Identification of a genomic reservoir for new TRIM genes in primate genomes.</title>
        <authorList>
            <person name="Han K."/>
            <person name="Lou D.I."/>
            <person name="Sawyer S.L."/>
        </authorList>
    </citation>
    <scope>NUCLEOTIDE SEQUENCE [MRNA] OF 152-296</scope>
</reference>
<accession>I1YAP6</accession>
<name>TRI77_HUMAN</name>
<feature type="chain" id="PRO_0000421830" description="Tripartite motif-containing protein 77">
    <location>
        <begin position="1"/>
        <end position="450"/>
    </location>
</feature>
<feature type="domain" description="B30.2/SPRY" evidence="3">
    <location>
        <begin position="269"/>
        <end position="450"/>
    </location>
</feature>
<feature type="zinc finger region" description="RING-type" evidence="2">
    <location>
        <begin position="15"/>
        <end position="56"/>
    </location>
</feature>
<feature type="zinc finger region" description="B box-type" evidence="1">
    <location>
        <begin position="88"/>
        <end position="131"/>
    </location>
</feature>
<feature type="binding site" evidence="1">
    <location>
        <position position="93"/>
    </location>
    <ligand>
        <name>Zn(2+)</name>
        <dbReference type="ChEBI" id="CHEBI:29105"/>
    </ligand>
</feature>
<feature type="binding site" evidence="1">
    <location>
        <position position="96"/>
    </location>
    <ligand>
        <name>Zn(2+)</name>
        <dbReference type="ChEBI" id="CHEBI:29105"/>
    </ligand>
</feature>
<feature type="binding site" evidence="1">
    <location>
        <position position="115"/>
    </location>
    <ligand>
        <name>Zn(2+)</name>
        <dbReference type="ChEBI" id="CHEBI:29105"/>
    </ligand>
</feature>
<feature type="binding site" evidence="1">
    <location>
        <position position="121"/>
    </location>
    <ligand>
        <name>Zn(2+)</name>
        <dbReference type="ChEBI" id="CHEBI:29105"/>
    </ligand>
</feature>
<organism>
    <name type="scientific">Homo sapiens</name>
    <name type="common">Human</name>
    <dbReference type="NCBI Taxonomy" id="9606"/>
    <lineage>
        <taxon>Eukaryota</taxon>
        <taxon>Metazoa</taxon>
        <taxon>Chordata</taxon>
        <taxon>Craniata</taxon>
        <taxon>Vertebrata</taxon>
        <taxon>Euteleostomi</taxon>
        <taxon>Mammalia</taxon>
        <taxon>Eutheria</taxon>
        <taxon>Euarchontoglires</taxon>
        <taxon>Primates</taxon>
        <taxon>Haplorrhini</taxon>
        <taxon>Catarrhini</taxon>
        <taxon>Hominidae</taxon>
        <taxon>Homo</taxon>
    </lineage>
</organism>
<proteinExistence type="evidence at transcript level"/>
<sequence length="450" mass="52450">MASAITQCSTSELTCSICTDYLTDPVTICCGHRFCSPCLCLLWEDTLTPNCCPVCREISQQMYFKRIIFAEKQVIPTRESVPCQLSSSAMLICRRHQEIKNLICETDRSLLCFLCSQSPRHATHKHYMTREADEYYRKKLLIQMKSIWKKKQKNQRNLNRETNIIGTWEVFINLRSMMISAEYPKVCQYLREEEQKHVESLAREGRIIFQQLKRSQTRMAKMGILLREMYEKLKEMSCKADVNLPQDLGDVMKRNEFLRLAMPQPVNPQLSAWTITGVSERLNFFRVYITLDRKICSNHKLLFEDLRHLQCSLDDTDMSCNPTSTQYTSSWGAQILSSGKHYWEVDVKDSCNWVIGLCREAWTKRNDMRLDSEGIFLLLCLKVDDHFSLFSTSPLLPHYIPRPQGWLGVFLDYECGIVSFVNVAQSSLICSFLSRIFYFPLRPFICHGSK</sequence>